<feature type="chain" id="PRO_0000074482" description="Pheromone-binding protein 2">
    <location>
        <begin position="1"/>
        <end position="35" status="greater than"/>
    </location>
</feature>
<feature type="non-terminal residue">
    <location>
        <position position="35"/>
    </location>
</feature>
<organism>
    <name type="scientific">Lymantria dispar</name>
    <name type="common">Gypsy moth</name>
    <name type="synonym">Porthetria dispar</name>
    <dbReference type="NCBI Taxonomy" id="13123"/>
    <lineage>
        <taxon>Eukaryota</taxon>
        <taxon>Metazoa</taxon>
        <taxon>Ecdysozoa</taxon>
        <taxon>Arthropoda</taxon>
        <taxon>Hexapoda</taxon>
        <taxon>Insecta</taxon>
        <taxon>Pterygota</taxon>
        <taxon>Neoptera</taxon>
        <taxon>Endopterygota</taxon>
        <taxon>Lepidoptera</taxon>
        <taxon>Glossata</taxon>
        <taxon>Ditrysia</taxon>
        <taxon>Noctuoidea</taxon>
        <taxon>Erebidae</taxon>
        <taxon>Lymantriinae</taxon>
        <taxon>Lymantria</taxon>
    </lineage>
</organism>
<comment type="function">
    <text>This major soluble protein in olfactory sensilla of male moths might serve to solubilize the extremely hydrophobic pheromone molecules and to transport pheromone through the aqueous lymph to receptors located on olfactory cilia.</text>
</comment>
<comment type="subunit">
    <text evidence="1">Homodimer.</text>
</comment>
<comment type="tissue specificity">
    <text>Antenna.</text>
</comment>
<comment type="similarity">
    <text evidence="1">Belongs to the PBP/GOBP family.</text>
</comment>
<reference key="1">
    <citation type="journal article" date="1991" name="J. Neurobiol.">
        <title>Odorant-binding-protein subfamilies associate with distinct classes of olfactory receptor neurons in insects.</title>
        <authorList>
            <person name="Vogt R.G."/>
            <person name="Prestwich G.D."/>
            <person name="Lerner M.R."/>
        </authorList>
    </citation>
    <scope>PROTEIN SEQUENCE</scope>
</reference>
<reference key="2">
    <citation type="journal article" date="1989" name="J. Neurosci.">
        <title>Expression of pheromone binding proteins during antennal development in the gypsy moth Lymantria dispar.</title>
        <authorList>
            <person name="Vogt R.G."/>
            <person name="Koehne A.C."/>
            <person name="Dubnau J.T."/>
            <person name="Prestwich G.D."/>
        </authorList>
    </citation>
    <scope>PROTEIN SEQUENCE OF 1-30</scope>
</reference>
<sequence>SKDVMHQMALKFGKPIKLLQQELGADDSVVKDFLD</sequence>
<evidence type="ECO:0000305" key="1"/>
<proteinExistence type="evidence at protein level"/>
<accession>P34177</accession>
<protein>
    <recommendedName>
        <fullName>Pheromone-binding protein 2</fullName>
        <shortName>PBP2</shortName>
    </recommendedName>
</protein>
<name>PBP2_LYMDI</name>
<dbReference type="PIR" id="B60914">
    <property type="entry name" value="B60914"/>
</dbReference>
<dbReference type="SMR" id="P34177"/>
<dbReference type="GO" id="GO:0005550">
    <property type="term" value="F:pheromone binding"/>
    <property type="evidence" value="ECO:0007669"/>
    <property type="project" value="UniProtKB-KW"/>
</dbReference>
<dbReference type="GO" id="GO:0019236">
    <property type="term" value="P:response to pheromone"/>
    <property type="evidence" value="ECO:0007669"/>
    <property type="project" value="UniProtKB-KW"/>
</dbReference>
<keyword id="KW-0903">Direct protein sequencing</keyword>
<keyword id="KW-0589">Pheromone response</keyword>
<keyword id="KW-0590">Pheromone-binding</keyword>
<keyword id="KW-0813">Transport</keyword>